<reference key="1">
    <citation type="journal article" date="2009" name="J. Cell Sci.">
        <title>Claudin-10 exists in six alternatively spliced isoforms that exhibit distinct localization and function.</title>
        <authorList>
            <person name="Gunzel D."/>
            <person name="Stuiver M."/>
            <person name="Kausalya P.J."/>
            <person name="Haisch L."/>
            <person name="Krug S.M."/>
            <person name="Rosenthal R."/>
            <person name="Meij I.C."/>
            <person name="Hunziker W."/>
            <person name="Fromm M."/>
            <person name="Muller D."/>
        </authorList>
    </citation>
    <scope>NUCLEOTIDE SEQUENCE [MRNA] (ISOFORMS 1; 2 AND 3)</scope>
    <scope>FUNCTION (ISOFORMS 1 AND 2)</scope>
    <scope>TRANSPORTER ACTIVITY (ISOFORMS 1 AND 2)</scope>
    <scope>SUBCELLULAR LOCATION (ISOFORMS 1 AND 2)</scope>
    <scope>ALTERNATIVE SPLICING</scope>
    <source>
        <tissue>Kidney</tissue>
    </source>
</reference>
<reference key="2">
    <citation type="submission" date="1998-06" db="EMBL/GenBank/DDBJ databases">
        <authorList>
            <person name="Keen T.J."/>
        </authorList>
    </citation>
    <scope>NUCLEOTIDE SEQUENCE [MRNA] (ISOFORM 1)</scope>
    <source>
        <tissue>Liver</tissue>
    </source>
</reference>
<reference key="3">
    <citation type="journal article" date="2004" name="Nat. Genet.">
        <title>Complete sequencing and characterization of 21,243 full-length human cDNAs.</title>
        <authorList>
            <person name="Ota T."/>
            <person name="Suzuki Y."/>
            <person name="Nishikawa T."/>
            <person name="Otsuki T."/>
            <person name="Sugiyama T."/>
            <person name="Irie R."/>
            <person name="Wakamatsu A."/>
            <person name="Hayashi K."/>
            <person name="Sato H."/>
            <person name="Nagai K."/>
            <person name="Kimura K."/>
            <person name="Makita H."/>
            <person name="Sekine M."/>
            <person name="Obayashi M."/>
            <person name="Nishi T."/>
            <person name="Shibahara T."/>
            <person name="Tanaka T."/>
            <person name="Ishii S."/>
            <person name="Yamamoto J."/>
            <person name="Saito K."/>
            <person name="Kawai Y."/>
            <person name="Isono Y."/>
            <person name="Nakamura Y."/>
            <person name="Nagahari K."/>
            <person name="Murakami K."/>
            <person name="Yasuda T."/>
            <person name="Iwayanagi T."/>
            <person name="Wagatsuma M."/>
            <person name="Shiratori A."/>
            <person name="Sudo H."/>
            <person name="Hosoiri T."/>
            <person name="Kaku Y."/>
            <person name="Kodaira H."/>
            <person name="Kondo H."/>
            <person name="Sugawara M."/>
            <person name="Takahashi M."/>
            <person name="Kanda K."/>
            <person name="Yokoi T."/>
            <person name="Furuya T."/>
            <person name="Kikkawa E."/>
            <person name="Omura Y."/>
            <person name="Abe K."/>
            <person name="Kamihara K."/>
            <person name="Katsuta N."/>
            <person name="Sato K."/>
            <person name="Tanikawa M."/>
            <person name="Yamazaki M."/>
            <person name="Ninomiya K."/>
            <person name="Ishibashi T."/>
            <person name="Yamashita H."/>
            <person name="Murakawa K."/>
            <person name="Fujimori K."/>
            <person name="Tanai H."/>
            <person name="Kimata M."/>
            <person name="Watanabe M."/>
            <person name="Hiraoka S."/>
            <person name="Chiba Y."/>
            <person name="Ishida S."/>
            <person name="Ono Y."/>
            <person name="Takiguchi S."/>
            <person name="Watanabe S."/>
            <person name="Yosida M."/>
            <person name="Hotuta T."/>
            <person name="Kusano J."/>
            <person name="Kanehori K."/>
            <person name="Takahashi-Fujii A."/>
            <person name="Hara H."/>
            <person name="Tanase T.-O."/>
            <person name="Nomura Y."/>
            <person name="Togiya S."/>
            <person name="Komai F."/>
            <person name="Hara R."/>
            <person name="Takeuchi K."/>
            <person name="Arita M."/>
            <person name="Imose N."/>
            <person name="Musashino K."/>
            <person name="Yuuki H."/>
            <person name="Oshima A."/>
            <person name="Sasaki N."/>
            <person name="Aotsuka S."/>
            <person name="Yoshikawa Y."/>
            <person name="Matsunawa H."/>
            <person name="Ichihara T."/>
            <person name="Shiohata N."/>
            <person name="Sano S."/>
            <person name="Moriya S."/>
            <person name="Momiyama H."/>
            <person name="Satoh N."/>
            <person name="Takami S."/>
            <person name="Terashima Y."/>
            <person name="Suzuki O."/>
            <person name="Nakagawa S."/>
            <person name="Senoh A."/>
            <person name="Mizoguchi H."/>
            <person name="Goto Y."/>
            <person name="Shimizu F."/>
            <person name="Wakebe H."/>
            <person name="Hishigaki H."/>
            <person name="Watanabe T."/>
            <person name="Sugiyama A."/>
            <person name="Takemoto M."/>
            <person name="Kawakami B."/>
            <person name="Yamazaki M."/>
            <person name="Watanabe K."/>
            <person name="Kumagai A."/>
            <person name="Itakura S."/>
            <person name="Fukuzumi Y."/>
            <person name="Fujimori Y."/>
            <person name="Komiyama M."/>
            <person name="Tashiro H."/>
            <person name="Tanigami A."/>
            <person name="Fujiwara T."/>
            <person name="Ono T."/>
            <person name="Yamada K."/>
            <person name="Fujii Y."/>
            <person name="Ozaki K."/>
            <person name="Hirao M."/>
            <person name="Ohmori Y."/>
            <person name="Kawabata A."/>
            <person name="Hikiji T."/>
            <person name="Kobatake N."/>
            <person name="Inagaki H."/>
            <person name="Ikema Y."/>
            <person name="Okamoto S."/>
            <person name="Okitani R."/>
            <person name="Kawakami T."/>
            <person name="Noguchi S."/>
            <person name="Itoh T."/>
            <person name="Shigeta K."/>
            <person name="Senba T."/>
            <person name="Matsumura K."/>
            <person name="Nakajima Y."/>
            <person name="Mizuno T."/>
            <person name="Morinaga M."/>
            <person name="Sasaki M."/>
            <person name="Togashi T."/>
            <person name="Oyama M."/>
            <person name="Hata H."/>
            <person name="Watanabe M."/>
            <person name="Komatsu T."/>
            <person name="Mizushima-Sugano J."/>
            <person name="Satoh T."/>
            <person name="Shirai Y."/>
            <person name="Takahashi Y."/>
            <person name="Nakagawa K."/>
            <person name="Okumura K."/>
            <person name="Nagase T."/>
            <person name="Nomura N."/>
            <person name="Kikuchi H."/>
            <person name="Masuho Y."/>
            <person name="Yamashita R."/>
            <person name="Nakai K."/>
            <person name="Yada T."/>
            <person name="Nakamura Y."/>
            <person name="Ohara O."/>
            <person name="Isogai T."/>
            <person name="Sugano S."/>
        </authorList>
    </citation>
    <scope>NUCLEOTIDE SEQUENCE [LARGE SCALE MRNA] (ISOFORMS 1 AND 2)</scope>
    <source>
        <tissue>Kidney</tissue>
    </source>
</reference>
<reference key="4">
    <citation type="submission" date="2004-06" db="EMBL/GenBank/DDBJ databases">
        <title>Cloning of human full open reading frames in Gateway(TM) system entry vector (pDONR201).</title>
        <authorList>
            <person name="Ebert L."/>
            <person name="Schick M."/>
            <person name="Neubert P."/>
            <person name="Schatten R."/>
            <person name="Henze S."/>
            <person name="Korn B."/>
        </authorList>
    </citation>
    <scope>NUCLEOTIDE SEQUENCE [LARGE SCALE MRNA] (ISOFORM 1)</scope>
</reference>
<reference key="5">
    <citation type="journal article" date="2004" name="Nature">
        <title>The DNA sequence and analysis of human chromosome 13.</title>
        <authorList>
            <person name="Dunham A."/>
            <person name="Matthews L.H."/>
            <person name="Burton J."/>
            <person name="Ashurst J.L."/>
            <person name="Howe K.L."/>
            <person name="Ashcroft K.J."/>
            <person name="Beare D.M."/>
            <person name="Burford D.C."/>
            <person name="Hunt S.E."/>
            <person name="Griffiths-Jones S."/>
            <person name="Jones M.C."/>
            <person name="Keenan S.J."/>
            <person name="Oliver K."/>
            <person name="Scott C.E."/>
            <person name="Ainscough R."/>
            <person name="Almeida J.P."/>
            <person name="Ambrose K.D."/>
            <person name="Andrews D.T."/>
            <person name="Ashwell R.I.S."/>
            <person name="Babbage A.K."/>
            <person name="Bagguley C.L."/>
            <person name="Bailey J."/>
            <person name="Bannerjee R."/>
            <person name="Barlow K.F."/>
            <person name="Bates K."/>
            <person name="Beasley H."/>
            <person name="Bird C.P."/>
            <person name="Bray-Allen S."/>
            <person name="Brown A.J."/>
            <person name="Brown J.Y."/>
            <person name="Burrill W."/>
            <person name="Carder C."/>
            <person name="Carter N.P."/>
            <person name="Chapman J.C."/>
            <person name="Clamp M.E."/>
            <person name="Clark S.Y."/>
            <person name="Clarke G."/>
            <person name="Clee C.M."/>
            <person name="Clegg S.C."/>
            <person name="Cobley V."/>
            <person name="Collins J.E."/>
            <person name="Corby N."/>
            <person name="Coville G.J."/>
            <person name="Deloukas P."/>
            <person name="Dhami P."/>
            <person name="Dunham I."/>
            <person name="Dunn M."/>
            <person name="Earthrowl M.E."/>
            <person name="Ellington A.G."/>
            <person name="Faulkner L."/>
            <person name="Frankish A.G."/>
            <person name="Frankland J."/>
            <person name="French L."/>
            <person name="Garner P."/>
            <person name="Garnett J."/>
            <person name="Gilbert J.G.R."/>
            <person name="Gilson C.J."/>
            <person name="Ghori J."/>
            <person name="Grafham D.V."/>
            <person name="Gribble S.M."/>
            <person name="Griffiths C."/>
            <person name="Hall R.E."/>
            <person name="Hammond S."/>
            <person name="Harley J.L."/>
            <person name="Hart E.A."/>
            <person name="Heath P.D."/>
            <person name="Howden P.J."/>
            <person name="Huckle E.J."/>
            <person name="Hunt P.J."/>
            <person name="Hunt A.R."/>
            <person name="Johnson C."/>
            <person name="Johnson D."/>
            <person name="Kay M."/>
            <person name="Kimberley A.M."/>
            <person name="King A."/>
            <person name="Laird G.K."/>
            <person name="Langford C.J."/>
            <person name="Lawlor S."/>
            <person name="Leongamornlert D.A."/>
            <person name="Lloyd D.M."/>
            <person name="Lloyd C."/>
            <person name="Loveland J.E."/>
            <person name="Lovell J."/>
            <person name="Martin S."/>
            <person name="Mashreghi-Mohammadi M."/>
            <person name="McLaren S.J."/>
            <person name="McMurray A."/>
            <person name="Milne S."/>
            <person name="Moore M.J.F."/>
            <person name="Nickerson T."/>
            <person name="Palmer S.A."/>
            <person name="Pearce A.V."/>
            <person name="Peck A.I."/>
            <person name="Pelan S."/>
            <person name="Phillimore B."/>
            <person name="Porter K.M."/>
            <person name="Rice C.M."/>
            <person name="Searle S."/>
            <person name="Sehra H.K."/>
            <person name="Shownkeen R."/>
            <person name="Skuce C.D."/>
            <person name="Smith M."/>
            <person name="Steward C.A."/>
            <person name="Sycamore N."/>
            <person name="Tester J."/>
            <person name="Thomas D.W."/>
            <person name="Tracey A."/>
            <person name="Tromans A."/>
            <person name="Tubby B."/>
            <person name="Wall M."/>
            <person name="Wallis J.M."/>
            <person name="West A.P."/>
            <person name="Whitehead S.L."/>
            <person name="Willey D.L."/>
            <person name="Wilming L."/>
            <person name="Wray P.W."/>
            <person name="Wright M.W."/>
            <person name="Young L."/>
            <person name="Coulson A."/>
            <person name="Durbin R.M."/>
            <person name="Hubbard T."/>
            <person name="Sulston J.E."/>
            <person name="Beck S."/>
            <person name="Bentley D.R."/>
            <person name="Rogers J."/>
            <person name="Ross M.T."/>
        </authorList>
    </citation>
    <scope>NUCLEOTIDE SEQUENCE [LARGE SCALE GENOMIC DNA]</scope>
</reference>
<reference key="6">
    <citation type="submission" date="2005-07" db="EMBL/GenBank/DDBJ databases">
        <authorList>
            <person name="Mural R.J."/>
            <person name="Istrail S."/>
            <person name="Sutton G.G."/>
            <person name="Florea L."/>
            <person name="Halpern A.L."/>
            <person name="Mobarry C.M."/>
            <person name="Lippert R."/>
            <person name="Walenz B."/>
            <person name="Shatkay H."/>
            <person name="Dew I."/>
            <person name="Miller J.R."/>
            <person name="Flanigan M.J."/>
            <person name="Edwards N.J."/>
            <person name="Bolanos R."/>
            <person name="Fasulo D."/>
            <person name="Halldorsson B.V."/>
            <person name="Hannenhalli S."/>
            <person name="Turner R."/>
            <person name="Yooseph S."/>
            <person name="Lu F."/>
            <person name="Nusskern D.R."/>
            <person name="Shue B.C."/>
            <person name="Zheng X.H."/>
            <person name="Zhong F."/>
            <person name="Delcher A.L."/>
            <person name="Huson D.H."/>
            <person name="Kravitz S.A."/>
            <person name="Mouchard L."/>
            <person name="Reinert K."/>
            <person name="Remington K.A."/>
            <person name="Clark A.G."/>
            <person name="Waterman M.S."/>
            <person name="Eichler E.E."/>
            <person name="Adams M.D."/>
            <person name="Hunkapiller M.W."/>
            <person name="Myers E.W."/>
            <person name="Venter J.C."/>
        </authorList>
    </citation>
    <scope>NUCLEOTIDE SEQUENCE [LARGE SCALE GENOMIC DNA]</scope>
</reference>
<reference key="7">
    <citation type="journal article" date="2004" name="Genome Res.">
        <title>The status, quality, and expansion of the NIH full-length cDNA project: the Mammalian Gene Collection (MGC).</title>
        <authorList>
            <consortium name="The MGC Project Team"/>
        </authorList>
    </citation>
    <scope>NUCLEOTIDE SEQUENCE [LARGE SCALE MRNA] (ISOFORM 1)</scope>
    <source>
        <tissue>Skeletal muscle</tissue>
    </source>
</reference>
<reference key="8">
    <citation type="journal article" date="2009" name="Proc. Natl. Acad. Sci. U.S.A.">
        <title>Claudin-16 and claudin-19 interaction is required for their assembly into tight junctions and for renal reabsorption of magnesium.</title>
        <authorList>
            <person name="Hou J."/>
            <person name="Renigunta A."/>
            <person name="Gomes A.S."/>
            <person name="Hou M."/>
            <person name="Paul D.L."/>
            <person name="Waldegger S."/>
            <person name="Goodenough D.A."/>
        </authorList>
    </citation>
    <scope>INTERACTION WITH CLDN19 (ISOFORMS 1 AND 2)</scope>
</reference>
<reference key="9">
    <citation type="journal article" date="2022" name="Ann. N. Y. Acad. Sci.">
        <title>Tight junction channels claudin-10b and claudin-15: Functional mapping of pore-lining residues.</title>
        <authorList>
            <person name="Hempel C."/>
            <person name="Rosenthal R."/>
            <person name="Fromm A."/>
            <person name="Krug S.M."/>
            <person name="Fromm M."/>
            <person name="Guenzel D."/>
            <person name="Piontek J."/>
        </authorList>
    </citation>
    <scope>FUNCTION (ISOFORM 1)</scope>
    <scope>TRANSPORTER ACTIVITY (ISOFORM 1)</scope>
    <scope>SUBCELLULAR LOCATION (ISOFORM 1)</scope>
    <scope>MUTAGENESIS OF ASP-36 AND LYS-64</scope>
</reference>
<reference key="10">
    <citation type="journal article" date="2022" name="Nat. Commun.">
        <title>Nanoscale segregation of channel and barrier claudins enables paracellular ion flux.</title>
        <authorList>
            <person name="Gonschior H."/>
            <person name="Schmied C."/>
            <person name="Van der Veen R.E."/>
            <person name="Eichhorst J."/>
            <person name="Himmerkus N."/>
            <person name="Piontek J."/>
            <person name="Guenzel D."/>
            <person name="Bleich M."/>
            <person name="Furuse M."/>
            <person name="Haucke V."/>
            <person name="Lehmann M."/>
        </authorList>
    </citation>
    <scope>FUNCTION (ISOFORMS 1 AND 2)</scope>
    <scope>TRANSPORTER ACTIVITY (ISOFORM 2)</scope>
    <scope>SUBUNIT</scope>
</reference>
<reference key="11">
    <citation type="journal article" date="2017" name="PLoS Genet.">
        <title>Altered paracellular cation permeability due to a rare CLDN10B variant causes anhidrosis and kidney damage.</title>
        <authorList>
            <person name="Klar J."/>
            <person name="Piontek J."/>
            <person name="Milatz S."/>
            <person name="Tariq M."/>
            <person name="Jameel M."/>
            <person name="Breiderhoff T."/>
            <person name="Schuster J."/>
            <person name="Fatima A."/>
            <person name="Asif M."/>
            <person name="Sher M."/>
            <person name="Maebert K."/>
            <person name="Fromm A."/>
            <person name="Baig S.M."/>
            <person name="Guenzel D."/>
            <person name="Dahl N."/>
        </authorList>
    </citation>
    <scope>INVOLVEMENT IN HELIX</scope>
    <scope>VARIANT HELIX LYS-48</scope>
    <scope>CHARACTERIZATION OF VARIANT HELIX LYS-48</scope>
    <scope>FUNCTION (ISOFORM 1)</scope>
    <scope>TISSUE SPECIFICITY</scope>
    <scope>SUBCELLULAR LOCATION (ISOFORM 1)</scope>
    <scope>SUBUNIT</scope>
</reference>
<reference key="12">
    <citation type="journal article" date="2018" name="Genet. Med.">
        <title>Multiplex epithelium dysfunction due to CLDN10 mutation: the HELIX syndrome.</title>
        <authorList>
            <person name="Hadj-Rabia S."/>
            <person name="Brideau G."/>
            <person name="Al-Sarraj Y."/>
            <person name="Maroun R.C."/>
            <person name="Figueres M.L."/>
            <person name="Leclerc-Mercier S."/>
            <person name="Olinger E."/>
            <person name="Baron S."/>
            <person name="Chaussain C."/>
            <person name="Nochy D."/>
            <person name="Taha R.Z."/>
            <person name="Knebelmann B."/>
            <person name="Joshi V."/>
            <person name="Curmi P.A."/>
            <person name="Kambouris M."/>
            <person name="Vargas-Poussou R."/>
            <person name="Bodemer C."/>
            <person name="Devuyst O."/>
            <person name="Houillier P."/>
            <person name="El-Shanti H."/>
        </authorList>
    </citation>
    <scope>INVOLVEMENT IN HELIX</scope>
    <scope>VARIANT HELIX LEU-131</scope>
    <scope>CHARACTERIZATION OF VARIANT HELIX LEU-131</scope>
    <scope>FUNCTION (ISOFORM 1)</scope>
    <scope>TISSUE SPECIFICITY</scope>
    <scope>SUBCELLULAR LOCATION (ISOFORM 1)</scope>
</reference>
<name>CLD10_HUMAN</name>
<protein>
    <recommendedName>
        <fullName evidence="11">Claudin-10</fullName>
    </recommendedName>
    <alternativeName>
        <fullName>Oligodendrocyte-specific protein-like</fullName>
        <shortName>OSP-like</shortName>
    </alternativeName>
</protein>
<sequence length="228" mass="24488">MASTASEIIAFMVSISGWVLVSSTLPTDYWKVSTIDGTVITTATYWANLWKACVTDSTGVSNCKDFPSMLALDGYIQACRGLMIAAVSLGFFGSIFALFGMKCTKVGGSDKAKAKIACLAGIVFILSGLCSMTGCSLYANKITTEFFDPLFVEQKYELGAALFIGWAGASLCIIGGVIFCFSISDNNKTPRYTYNGATSVMSSRTKYHGGEDFKTTNPSKQFDKNAYV</sequence>
<evidence type="ECO:0000250" key="1"/>
<evidence type="ECO:0000250" key="2">
    <source>
        <dbReference type="UniProtKB" id="Q9Z0S6"/>
    </source>
</evidence>
<evidence type="ECO:0000255" key="3"/>
<evidence type="ECO:0000269" key="4">
    <source>
    </source>
</evidence>
<evidence type="ECO:0000269" key="5">
    <source>
    </source>
</evidence>
<evidence type="ECO:0000269" key="6">
    <source>
    </source>
</evidence>
<evidence type="ECO:0000269" key="7">
    <source>
    </source>
</evidence>
<evidence type="ECO:0000269" key="8">
    <source>
    </source>
</evidence>
<evidence type="ECO:0000269" key="9">
    <source>
    </source>
</evidence>
<evidence type="ECO:0000303" key="10">
    <source>
    </source>
</evidence>
<evidence type="ECO:0000303" key="11">
    <source>
    </source>
</evidence>
<evidence type="ECO:0000303" key="12">
    <source>
    </source>
</evidence>
<evidence type="ECO:0000305" key="13"/>
<evidence type="ECO:0000312" key="14">
    <source>
        <dbReference type="HGNC" id="HGNC:2033"/>
    </source>
</evidence>
<organism>
    <name type="scientific">Homo sapiens</name>
    <name type="common">Human</name>
    <dbReference type="NCBI Taxonomy" id="9606"/>
    <lineage>
        <taxon>Eukaryota</taxon>
        <taxon>Metazoa</taxon>
        <taxon>Chordata</taxon>
        <taxon>Craniata</taxon>
        <taxon>Vertebrata</taxon>
        <taxon>Euteleostomi</taxon>
        <taxon>Mammalia</taxon>
        <taxon>Eutheria</taxon>
        <taxon>Euarchontoglires</taxon>
        <taxon>Primates</taxon>
        <taxon>Haplorrhini</taxon>
        <taxon>Catarrhini</taxon>
        <taxon>Hominidae</taxon>
        <taxon>Homo</taxon>
    </lineage>
</organism>
<dbReference type="EMBL" id="U89916">
    <property type="protein sequence ID" value="AAC79506.1"/>
    <property type="molecule type" value="mRNA"/>
</dbReference>
<dbReference type="EMBL" id="AK055855">
    <property type="protein sequence ID" value="BAB71030.1"/>
    <property type="molecule type" value="mRNA"/>
</dbReference>
<dbReference type="EMBL" id="AK315737">
    <property type="protein sequence ID" value="BAG38092.1"/>
    <property type="molecule type" value="mRNA"/>
</dbReference>
<dbReference type="EMBL" id="CR456845">
    <property type="protein sequence ID" value="CAG33126.1"/>
    <property type="molecule type" value="mRNA"/>
</dbReference>
<dbReference type="EMBL" id="AL139376">
    <property type="status" value="NOT_ANNOTATED_CDS"/>
    <property type="molecule type" value="Genomic_DNA"/>
</dbReference>
<dbReference type="EMBL" id="AL357061">
    <property type="status" value="NOT_ANNOTATED_CDS"/>
    <property type="molecule type" value="Genomic_DNA"/>
</dbReference>
<dbReference type="EMBL" id="AL627382">
    <property type="status" value="NOT_ANNOTATED_CDS"/>
    <property type="molecule type" value="Genomic_DNA"/>
</dbReference>
<dbReference type="EMBL" id="CH471085">
    <property type="protein sequence ID" value="EAX08955.1"/>
    <property type="molecule type" value="Genomic_DNA"/>
</dbReference>
<dbReference type="EMBL" id="BC010920">
    <property type="protein sequence ID" value="AAH10920.1"/>
    <property type="molecule type" value="mRNA"/>
</dbReference>
<dbReference type="CCDS" id="CCDS9475.1">
    <molecule id="P78369-2"/>
</dbReference>
<dbReference type="CCDS" id="CCDS9476.1">
    <molecule id="P78369-1"/>
</dbReference>
<dbReference type="RefSeq" id="NP_001153572.1">
    <molecule id="P78369-3"/>
    <property type="nucleotide sequence ID" value="NM_001160100.2"/>
</dbReference>
<dbReference type="RefSeq" id="NP_008915.1">
    <molecule id="P78369-1"/>
    <property type="nucleotide sequence ID" value="NM_006984.5"/>
</dbReference>
<dbReference type="RefSeq" id="NP_878268.1">
    <molecule id="P78369-2"/>
    <property type="nucleotide sequence ID" value="NM_182848.4"/>
</dbReference>
<dbReference type="SMR" id="P78369"/>
<dbReference type="BioGRID" id="114529">
    <property type="interactions" value="27"/>
</dbReference>
<dbReference type="FunCoup" id="P78369">
    <property type="interactions" value="364"/>
</dbReference>
<dbReference type="IntAct" id="P78369">
    <property type="interactions" value="21"/>
</dbReference>
<dbReference type="MINT" id="P78369"/>
<dbReference type="STRING" id="9606.ENSP00000299339"/>
<dbReference type="iPTMnet" id="P78369"/>
<dbReference type="PhosphoSitePlus" id="P78369"/>
<dbReference type="SwissPalm" id="P78369"/>
<dbReference type="BioMuta" id="CLDN10"/>
<dbReference type="DMDM" id="6685311"/>
<dbReference type="jPOST" id="P78369"/>
<dbReference type="MassIVE" id="P78369"/>
<dbReference type="PaxDb" id="9606-ENSP00000299339"/>
<dbReference type="PeptideAtlas" id="P78369"/>
<dbReference type="ProteomicsDB" id="57597">
    <molecule id="P78369-1"/>
</dbReference>
<dbReference type="ProteomicsDB" id="57598">
    <molecule id="P78369-2"/>
</dbReference>
<dbReference type="Antibodypedia" id="4562">
    <property type="antibodies" value="262 antibodies from 32 providers"/>
</dbReference>
<dbReference type="DNASU" id="9071"/>
<dbReference type="Ensembl" id="ENST00000299339.3">
    <molecule id="P78369-1"/>
    <property type="protein sequence ID" value="ENSP00000299339.2"/>
    <property type="gene ID" value="ENSG00000134873.10"/>
</dbReference>
<dbReference type="Ensembl" id="ENST00000376873.7">
    <molecule id="P78369-2"/>
    <property type="protein sequence ID" value="ENSP00000366069.2"/>
    <property type="gene ID" value="ENSG00000134873.10"/>
</dbReference>
<dbReference type="GeneID" id="9071"/>
<dbReference type="KEGG" id="hsa:9071"/>
<dbReference type="MANE-Select" id="ENST00000299339.3">
    <property type="protein sequence ID" value="ENSP00000299339.2"/>
    <property type="RefSeq nucleotide sequence ID" value="NM_006984.5"/>
    <property type="RefSeq protein sequence ID" value="NP_008915.1"/>
</dbReference>
<dbReference type="UCSC" id="uc001vmg.3">
    <molecule id="P78369-1"/>
    <property type="organism name" value="human"/>
</dbReference>
<dbReference type="AGR" id="HGNC:2033"/>
<dbReference type="CTD" id="9071"/>
<dbReference type="DisGeNET" id="9071"/>
<dbReference type="GeneCards" id="CLDN10"/>
<dbReference type="HGNC" id="HGNC:2033">
    <property type="gene designation" value="CLDN10"/>
</dbReference>
<dbReference type="HPA" id="ENSG00000134873">
    <property type="expression patterns" value="Group enriched (brain, kidney, pancreas, salivary gland)"/>
</dbReference>
<dbReference type="MalaCards" id="CLDN10"/>
<dbReference type="MIM" id="617579">
    <property type="type" value="gene"/>
</dbReference>
<dbReference type="MIM" id="617671">
    <property type="type" value="phenotype"/>
</dbReference>
<dbReference type="neXtProt" id="NX_P78369"/>
<dbReference type="OpenTargets" id="ENSG00000134873"/>
<dbReference type="Orphanet" id="528105">
    <property type="disease" value="Hypohidrosis-electrolyte imbalance-lacrimal gland dysfunction-ichthyosis-xerostomia syndrome"/>
</dbReference>
<dbReference type="PharmGKB" id="PA26558"/>
<dbReference type="VEuPathDB" id="HostDB:ENSG00000134873"/>
<dbReference type="eggNOG" id="ENOG502QPNP">
    <property type="taxonomic scope" value="Eukaryota"/>
</dbReference>
<dbReference type="GeneTree" id="ENSGT00940000155232"/>
<dbReference type="HOGENOM" id="CLU_076370_0_0_1"/>
<dbReference type="InParanoid" id="P78369"/>
<dbReference type="OMA" id="CKEFISM"/>
<dbReference type="OrthoDB" id="9936647at2759"/>
<dbReference type="PAN-GO" id="P78369">
    <property type="GO annotations" value="4 GO annotations based on evolutionary models"/>
</dbReference>
<dbReference type="PhylomeDB" id="P78369"/>
<dbReference type="TreeFam" id="TF331936"/>
<dbReference type="PathwayCommons" id="P78369"/>
<dbReference type="Reactome" id="R-HSA-420029">
    <property type="pathway name" value="Tight junction interactions"/>
</dbReference>
<dbReference type="SignaLink" id="P78369"/>
<dbReference type="BioGRID-ORCS" id="9071">
    <property type="hits" value="13 hits in 1139 CRISPR screens"/>
</dbReference>
<dbReference type="ChiTaRS" id="CLDN10">
    <property type="organism name" value="human"/>
</dbReference>
<dbReference type="GeneWiki" id="CLDN10"/>
<dbReference type="GenomeRNAi" id="9071"/>
<dbReference type="Pharos" id="P78369">
    <property type="development level" value="Tbio"/>
</dbReference>
<dbReference type="PRO" id="PR:P78369"/>
<dbReference type="Proteomes" id="UP000005640">
    <property type="component" value="Chromosome 13"/>
</dbReference>
<dbReference type="RNAct" id="P78369">
    <property type="molecule type" value="protein"/>
</dbReference>
<dbReference type="Bgee" id="ENSG00000134873">
    <property type="expression patterns" value="Expressed in parotid gland and 153 other cell types or tissues"/>
</dbReference>
<dbReference type="ExpressionAtlas" id="P78369">
    <property type="expression patterns" value="baseline and differential"/>
</dbReference>
<dbReference type="GO" id="GO:0005923">
    <property type="term" value="C:bicellular tight junction"/>
    <property type="evidence" value="ECO:0000250"/>
    <property type="project" value="UniProtKB"/>
</dbReference>
<dbReference type="GO" id="GO:0005737">
    <property type="term" value="C:cytoplasm"/>
    <property type="evidence" value="ECO:0007669"/>
    <property type="project" value="Ensembl"/>
</dbReference>
<dbReference type="GO" id="GO:0005886">
    <property type="term" value="C:plasma membrane"/>
    <property type="evidence" value="ECO:0000314"/>
    <property type="project" value="UniProtKB"/>
</dbReference>
<dbReference type="GO" id="GO:0070160">
    <property type="term" value="C:tight junction"/>
    <property type="evidence" value="ECO:0000314"/>
    <property type="project" value="UniProtKB"/>
</dbReference>
<dbReference type="GO" id="GO:0042802">
    <property type="term" value="F:identical protein binding"/>
    <property type="evidence" value="ECO:0000314"/>
    <property type="project" value="UniProtKB"/>
</dbReference>
<dbReference type="GO" id="GO:0160187">
    <property type="term" value="F:paracellular tight junction channel activity"/>
    <property type="evidence" value="ECO:0000314"/>
    <property type="project" value="UniProtKB"/>
</dbReference>
<dbReference type="GO" id="GO:0005198">
    <property type="term" value="F:structural molecule activity"/>
    <property type="evidence" value="ECO:0007669"/>
    <property type="project" value="InterPro"/>
</dbReference>
<dbReference type="GO" id="GO:0070830">
    <property type="term" value="P:bicellular tight junction assembly"/>
    <property type="evidence" value="ECO:0000318"/>
    <property type="project" value="GO_Central"/>
</dbReference>
<dbReference type="GO" id="GO:0016338">
    <property type="term" value="P:calcium-independent cell-cell adhesion via plasma membrane cell-adhesion molecules"/>
    <property type="evidence" value="ECO:0000250"/>
    <property type="project" value="UniProtKB"/>
</dbReference>
<dbReference type="GO" id="GO:0007155">
    <property type="term" value="P:cell adhesion"/>
    <property type="evidence" value="ECO:0000318"/>
    <property type="project" value="GO_Central"/>
</dbReference>
<dbReference type="GO" id="GO:0006811">
    <property type="term" value="P:monoatomic ion transport"/>
    <property type="evidence" value="ECO:0007669"/>
    <property type="project" value="UniProtKB-KW"/>
</dbReference>
<dbReference type="GO" id="GO:0160184">
    <property type="term" value="P:paracellular transport"/>
    <property type="evidence" value="ECO:0000314"/>
    <property type="project" value="UniProtKB"/>
</dbReference>
<dbReference type="GO" id="GO:0043269">
    <property type="term" value="P:regulation of monoatomic ion transport"/>
    <property type="evidence" value="ECO:0000315"/>
    <property type="project" value="UniProtKB"/>
</dbReference>
<dbReference type="FunFam" id="1.20.140.150:FF:000001">
    <property type="entry name" value="Claudin"/>
    <property type="match status" value="1"/>
</dbReference>
<dbReference type="Gene3D" id="1.20.140.150">
    <property type="match status" value="1"/>
</dbReference>
<dbReference type="InterPro" id="IPR006187">
    <property type="entry name" value="Claudin"/>
</dbReference>
<dbReference type="InterPro" id="IPR003554">
    <property type="entry name" value="Claudin10"/>
</dbReference>
<dbReference type="InterPro" id="IPR017974">
    <property type="entry name" value="Claudin_CS"/>
</dbReference>
<dbReference type="InterPro" id="IPR004031">
    <property type="entry name" value="PMP22/EMP/MP20/Claudin"/>
</dbReference>
<dbReference type="PANTHER" id="PTHR12002">
    <property type="entry name" value="CLAUDIN"/>
    <property type="match status" value="1"/>
</dbReference>
<dbReference type="Pfam" id="PF00822">
    <property type="entry name" value="PMP22_Claudin"/>
    <property type="match status" value="1"/>
</dbReference>
<dbReference type="PRINTS" id="PR01077">
    <property type="entry name" value="CLAUDIN"/>
</dbReference>
<dbReference type="PRINTS" id="PR01383">
    <property type="entry name" value="CLAUDIN10"/>
</dbReference>
<dbReference type="PROSITE" id="PS01346">
    <property type="entry name" value="CLAUDIN"/>
    <property type="match status" value="1"/>
</dbReference>
<feature type="chain" id="PRO_0000144757" description="Claudin-10">
    <location>
        <begin position="1"/>
        <end position="228"/>
    </location>
</feature>
<feature type="transmembrane region" description="Helical" evidence="3">
    <location>
        <begin position="1"/>
        <end position="21"/>
    </location>
</feature>
<feature type="topological domain" description="Extracellular" evidence="3">
    <location>
        <begin position="22"/>
        <end position="80"/>
    </location>
</feature>
<feature type="transmembrane region" description="Helical" evidence="3">
    <location>
        <begin position="81"/>
        <end position="101"/>
    </location>
</feature>
<feature type="topological domain" description="Cytoplasmic" evidence="3">
    <location>
        <begin position="102"/>
        <end position="115"/>
    </location>
</feature>
<feature type="transmembrane region" description="Helical" evidence="3">
    <location>
        <begin position="116"/>
        <end position="136"/>
    </location>
</feature>
<feature type="topological domain" description="Extracellular" evidence="3">
    <location>
        <begin position="137"/>
        <end position="160"/>
    </location>
</feature>
<feature type="transmembrane region" description="Helical" evidence="3">
    <location>
        <begin position="161"/>
        <end position="181"/>
    </location>
</feature>
<feature type="topological domain" description="Cytoplasmic" evidence="3">
    <location>
        <begin position="182"/>
        <end position="228"/>
    </location>
</feature>
<feature type="splice variant" id="VSP_042898" description="In isoform 2." evidence="10 11">
    <original>MASTASEIIAFMVSISGWVLVSSTLPTDYWKVSTIDGTVITTATYWANLWKACVTDSTGVSNCKDFPSMLALD</original>
    <variation>MSRAQIWALVSGVGGFGALVAATTSNEWKVTTRASSVITATWVYQGLWMNCAGNALGSFHCRPHFTIFKVA</variation>
    <location>
        <begin position="1"/>
        <end position="73"/>
    </location>
</feature>
<feature type="splice variant" id="VSP_053550" description="In isoform 3." evidence="11">
    <original>MASTASEIIAFMVSISGWVLVSSTLPTDYWKVSTIDGTVITTATYWANLWKACVTDSTGVSNCKDFPSMLALD</original>
    <variation>MSRAQIWALVSGVGGFGALVAATTSNEWKVTTRASSVITATWVYQGLWMNCA</variation>
    <location>
        <begin position="1"/>
        <end position="73"/>
    </location>
</feature>
<feature type="sequence variant" id="VAR_080053" description="In HELIX; decreased function in regulation of paracellular ion transport as shown by reduced sodium permeability of cell layers expressing the mutant; affects self-interaction by inhibiting homodimerization in trans and promoting homodimerization in cis; no effect on localization to plasma membrane; dbSNP:rs759408749." evidence="6">
    <original>N</original>
    <variation>K</variation>
    <location>
        <position position="48"/>
    </location>
</feature>
<feature type="sequence variant" id="VAR_080054" description="In HELIX; strongly reduced localization at the plasma membrane; dbSNP:rs1555299783." evidence="7">
    <original>S</original>
    <variation>L</variation>
    <location>
        <position position="131"/>
    </location>
</feature>
<feature type="mutagenesis site" description="No effect on tight junction strand formation and ion selectivity." evidence="8">
    <original>D</original>
    <variation>A</variation>
    <location>
        <position position="36"/>
    </location>
</feature>
<feature type="mutagenesis site" description="Hinders formation of tight junction strands. A small fraction of these mutants is integrated into tight junction network resulting in increased permeability for monovalent cations." evidence="8">
    <original>K</original>
    <variation>W</variation>
    <variation>M</variation>
    <location>
        <position position="64"/>
    </location>
</feature>
<proteinExistence type="evidence at protein level"/>
<keyword id="KW-0025">Alternative splicing</keyword>
<keyword id="KW-0965">Cell junction</keyword>
<keyword id="KW-1003">Cell membrane</keyword>
<keyword id="KW-0225">Disease variant</keyword>
<keyword id="KW-0977">Ichthyosis</keyword>
<keyword id="KW-0406">Ion transport</keyword>
<keyword id="KW-0472">Membrane</keyword>
<keyword id="KW-1267">Proteomics identification</keyword>
<keyword id="KW-1185">Reference proteome</keyword>
<keyword id="KW-0796">Tight junction</keyword>
<keyword id="KW-0812">Transmembrane</keyword>
<keyword id="KW-1133">Transmembrane helix</keyword>
<keyword id="KW-0813">Transport</keyword>
<comment type="function">
    <text evidence="4 6 8 9">Forms paracellular channels: polymerizes in tight junction strands with cation- and anion-selective channels through the strands, conveying epithelial permeability in a process known as paracellular tight junction permeability.</text>
</comment>
<comment type="function">
    <molecule>Isoform 1</molecule>
    <text evidence="4 6 7 8 9">Forms cation-selective paracellular channels. In sweat glands and in the thick ascending limb (TAL) of Henle's loop in kidney, it controls paracellular sodium permeability which is essential for proper sweat production and renal function (PubMed:19383724, PubMed:28686597, PubMed:28771254, PubMed:35650657, PubMed:36008380).</text>
</comment>
<comment type="function">
    <molecule>Isoform 2</molecule>
    <text evidence="2 4 9">Forms anion-selective paracellular channels. In renal proximal tubules, it conveys selective chloride over hydrogencarbonate anion permeability which is required for renal chloride reabsorption and salt homeostasis.</text>
</comment>
<comment type="catalytic activity">
    <molecule>Isoform 1</molecule>
    <reaction evidence="4 8">
        <text>Na(+)(in) = Na(+)(out)</text>
        <dbReference type="Rhea" id="RHEA:34963"/>
        <dbReference type="ChEBI" id="CHEBI:29101"/>
    </reaction>
</comment>
<comment type="catalytic activity">
    <molecule>Isoform 1</molecule>
    <reaction evidence="4 8">
        <text>Li(+)(in) = Li(+)(out)</text>
        <dbReference type="Rhea" id="RHEA:78551"/>
        <dbReference type="ChEBI" id="CHEBI:49713"/>
    </reaction>
</comment>
<comment type="catalytic activity">
    <molecule>Isoform 1</molecule>
    <reaction evidence="4 8">
        <text>K(+)(in) = K(+)(out)</text>
        <dbReference type="Rhea" id="RHEA:29463"/>
        <dbReference type="ChEBI" id="CHEBI:29103"/>
    </reaction>
</comment>
<comment type="catalytic activity">
    <molecule>Isoform 1</molecule>
    <reaction evidence="4 8">
        <text>Rb(+)(in) = Rb(+)(out)</text>
        <dbReference type="Rhea" id="RHEA:78547"/>
        <dbReference type="ChEBI" id="CHEBI:49847"/>
    </reaction>
</comment>
<comment type="catalytic activity">
    <molecule>Isoform 1</molecule>
    <reaction evidence="4 8">
        <text>Cs(+)(in) = Cs(+)(out)</text>
        <dbReference type="Rhea" id="RHEA:78555"/>
        <dbReference type="ChEBI" id="CHEBI:49547"/>
    </reaction>
</comment>
<comment type="catalytic activity">
    <reaction evidence="8">
        <text>NH4(+)(in) = NH4(+)(out)</text>
        <dbReference type="Rhea" id="RHEA:28747"/>
        <dbReference type="ChEBI" id="CHEBI:28938"/>
    </reaction>
</comment>
<comment type="catalytic activity">
    <reaction evidence="8">
        <text>methylamine(out) = methylamine(in)</text>
        <dbReference type="Rhea" id="RHEA:74391"/>
        <dbReference type="ChEBI" id="CHEBI:59338"/>
    </reaction>
</comment>
<comment type="catalytic activity">
    <molecule>Isoform 1</molecule>
    <reaction evidence="4">
        <text>Mg(2+)(in) = Mg(2+)(out)</text>
        <dbReference type="Rhea" id="RHEA:29827"/>
        <dbReference type="ChEBI" id="CHEBI:18420"/>
    </reaction>
</comment>
<comment type="catalytic activity">
    <molecule>Isoform 1</molecule>
    <reaction evidence="4">
        <text>Ca(2+)(in) = Ca(2+)(out)</text>
        <dbReference type="Rhea" id="RHEA:29671"/>
        <dbReference type="ChEBI" id="CHEBI:29108"/>
    </reaction>
</comment>
<comment type="catalytic activity">
    <molecule>Isoform 1</molecule>
    <reaction evidence="4">
        <text>Sr(2+)(in) = Sr(2+)(out)</text>
        <dbReference type="Rhea" id="RHEA:78679"/>
        <dbReference type="ChEBI" id="CHEBI:35104"/>
    </reaction>
</comment>
<comment type="catalytic activity">
    <molecule>Isoform 2</molecule>
    <reaction evidence="9">
        <text>chloride(in) = chloride(out)</text>
        <dbReference type="Rhea" id="RHEA:29823"/>
        <dbReference type="ChEBI" id="CHEBI:17996"/>
    </reaction>
</comment>
<comment type="catalytic activity">
    <molecule>Isoform 2</molecule>
    <reaction evidence="4">
        <text>nitrate(in) = nitrate(out)</text>
        <dbReference type="Rhea" id="RHEA:34923"/>
        <dbReference type="ChEBI" id="CHEBI:17632"/>
    </reaction>
</comment>
<comment type="subunit">
    <text evidence="6 9">Can form homodimers both in trans (interaction between CLDN10 molecules in opposing membranes) and in cis (interaction between CLDN10 molecules within one membrane).</text>
</comment>
<comment type="subunit">
    <molecule>Isoform 1</molecule>
    <text evidence="5">Interacts with CLDN19.</text>
</comment>
<comment type="subunit">
    <molecule>Isoform 2</molecule>
    <text evidence="5">Interacts with CLDN19.</text>
</comment>
<comment type="interaction">
    <interactant intactId="EBI-13372810">
        <id>P78369</id>
    </interactant>
    <interactant intactId="EBI-19947314">
        <id>Q8NFU1</id>
        <label>BEST2</label>
    </interactant>
    <organismsDiffer>false</organismsDiffer>
    <experiments>3</experiments>
</comment>
<comment type="interaction">
    <interactant intactId="EBI-13372810">
        <id>P78369</id>
    </interactant>
    <interactant intactId="EBI-1045797">
        <id>Q8N5K1</id>
        <label>CISD2</label>
    </interactant>
    <organismsDiffer>false</organismsDiffer>
    <experiments>3</experiments>
</comment>
<comment type="interaction">
    <interactant intactId="EBI-13372810">
        <id>P78369</id>
    </interactant>
    <interactant intactId="EBI-18053395">
        <id>Q7Z5P4</id>
        <label>HSD17B13</label>
    </interactant>
    <organismsDiffer>false</organismsDiffer>
    <experiments>3</experiments>
</comment>
<comment type="interaction">
    <interactant intactId="EBI-13372810">
        <id>P78369</id>
    </interactant>
    <interactant intactId="EBI-12807478">
        <id>P35372-10</id>
        <label>OPRM1</label>
    </interactant>
    <organismsDiffer>false</organismsDiffer>
    <experiments>3</experiments>
</comment>
<comment type="interaction">
    <interactant intactId="EBI-13372810">
        <id>P78369</id>
    </interactant>
    <interactant intactId="EBI-594836">
        <id>O00623</id>
        <label>PEX12</label>
    </interactant>
    <organismsDiffer>false</organismsDiffer>
    <experiments>3</experiments>
</comment>
<comment type="interaction">
    <interactant intactId="EBI-13372810">
        <id>P78369</id>
    </interactant>
    <interactant intactId="EBI-1644241">
        <id>Q9H902</id>
        <label>REEP1</label>
    </interactant>
    <organismsDiffer>false</organismsDiffer>
    <experiments>3</experiments>
</comment>
<comment type="interaction">
    <interactant intactId="EBI-13372810">
        <id>P78369</id>
    </interactant>
    <interactant intactId="EBI-8638294">
        <id>Q9NUH8</id>
        <label>TMEM14B</label>
    </interactant>
    <organismsDiffer>false</organismsDiffer>
    <experiments>3</experiments>
</comment>
<comment type="interaction">
    <interactant intactId="EBI-13372810">
        <id>P78369</id>
    </interactant>
    <interactant intactId="EBI-723976">
        <id>Q9P0T7</id>
        <label>TMEM9</label>
    </interactant>
    <organismsDiffer>false</organismsDiffer>
    <experiments>3</experiments>
</comment>
<comment type="subcellular location">
    <molecule>Isoform 1</molecule>
    <subcellularLocation>
        <location evidence="4 8">Cell junction</location>
        <location evidence="4 8">Tight junction</location>
    </subcellularLocation>
    <subcellularLocation>
        <location evidence="4 6 7 8">Cell membrane</location>
        <topology evidence="3">Multi-pass membrane protein</topology>
    </subcellularLocation>
</comment>
<comment type="subcellular location">
    <molecule>Isoform 2</molecule>
    <subcellularLocation>
        <location evidence="4">Cell junction</location>
        <location evidence="4">Tight junction</location>
    </subcellularLocation>
    <subcellularLocation>
        <location evidence="4">Cell membrane</location>
        <topology evidence="3">Multi-pass membrane protein</topology>
    </subcellularLocation>
</comment>
<comment type="alternative products">
    <event type="alternative splicing"/>
    <isoform>
        <id>P78369-1</id>
        <name>1</name>
        <name evidence="11">Cldn10b</name>
        <sequence type="displayed"/>
    </isoform>
    <isoform>
        <id>P78369-2</id>
        <name>2</name>
        <name evidence="11">Cldn10a</name>
        <sequence type="described" ref="VSP_042898"/>
    </isoform>
    <isoform>
        <id>P78369-3</id>
        <name>3</name>
        <name evidence="11">Cldn10a_i1</name>
        <sequence type="described" ref="VSP_053550"/>
    </isoform>
</comment>
<comment type="tissue specificity">
    <text evidence="6 7">Expressed in the kidney, eccrine sweat glands and in all layers of the epidermis. In the kidney, it is detected in the thick ascending limb of Henle's loop (TAL) (PubMed:28686597, PubMed:28771254). In the sweat glands, it is expressed in cells from secretory portions, corresponding to the clear cells (PubMed:28686597).</text>
</comment>
<comment type="domain">
    <text evidence="1">The fourth transmembrane region (161-181) is necessary for integration into tight junctions.</text>
</comment>
<comment type="disease" evidence="6 7">
    <disease id="DI-05081">
        <name>HELIX syndrome</name>
        <acronym>HELIX</acronym>
        <description>An autosomal recessive disease characterized by congenital heat intolerance, generalized anhidrosis, inability to produce tears, dry mouth, electrolyte imbalance, and ichthyosis.</description>
        <dbReference type="MIM" id="617671"/>
    </disease>
    <text>The disease is caused by variants affecting the gene represented in this entry.</text>
</comment>
<comment type="miscellaneous">
    <molecule>Isoform 3</molecule>
    <text evidence="13">Produced by alternative splicing of isoform 2.</text>
</comment>
<comment type="similarity">
    <text evidence="13">Belongs to the claudin family.</text>
</comment>
<comment type="online information" name="Atlas of Genetics and Cytogenetics in Oncology and Haematology">
    <link uri="https://atlasgeneticsoncology.org/gene/45827/CLDN10"/>
</comment>
<accession>P78369</accession>
<accession>Q6IBF9</accession>
<accession>Q96N78</accession>
<gene>
    <name evidence="12 14" type="primary">CLDN10</name>
</gene>